<proteinExistence type="evidence at transcript level"/>
<keyword id="KW-0025">Alternative splicing</keyword>
<keyword id="KW-0963">Cytoplasm</keyword>
<keyword id="KW-0488">Methylation</keyword>
<keyword id="KW-0507">mRNA processing</keyword>
<keyword id="KW-0508">mRNA splicing</keyword>
<keyword id="KW-0539">Nucleus</keyword>
<keyword id="KW-1185">Reference proteome</keyword>
<keyword id="KW-0694">RNA-binding</keyword>
<organism>
    <name type="scientific">Bos taurus</name>
    <name type="common">Bovine</name>
    <dbReference type="NCBI Taxonomy" id="9913"/>
    <lineage>
        <taxon>Eukaryota</taxon>
        <taxon>Metazoa</taxon>
        <taxon>Chordata</taxon>
        <taxon>Craniata</taxon>
        <taxon>Vertebrata</taxon>
        <taxon>Euteleostomi</taxon>
        <taxon>Mammalia</taxon>
        <taxon>Eutheria</taxon>
        <taxon>Laurasiatheria</taxon>
        <taxon>Artiodactyla</taxon>
        <taxon>Ruminantia</taxon>
        <taxon>Pecora</taxon>
        <taxon>Bovidae</taxon>
        <taxon>Bovinae</taxon>
        <taxon>Bos</taxon>
    </lineage>
</organism>
<evidence type="ECO:0000250" key="1"/>
<evidence type="ECO:0000250" key="2">
    <source>
        <dbReference type="UniProtKB" id="A1A5R1"/>
    </source>
</evidence>
<evidence type="ECO:0000250" key="3">
    <source>
        <dbReference type="UniProtKB" id="O43251"/>
    </source>
</evidence>
<evidence type="ECO:0000250" key="4">
    <source>
        <dbReference type="UniProtKB" id="Q8BP71"/>
    </source>
</evidence>
<evidence type="ECO:0000255" key="5">
    <source>
        <dbReference type="PROSITE-ProRule" id="PRU00176"/>
    </source>
</evidence>
<evidence type="ECO:0000256" key="6">
    <source>
        <dbReference type="SAM" id="MobiDB-lite"/>
    </source>
</evidence>
<evidence type="ECO:0000303" key="7">
    <source>
    </source>
</evidence>
<evidence type="ECO:0000305" key="8"/>
<protein>
    <recommendedName>
        <fullName>RNA binding protein fox-1 homolog 2</fullName>
    </recommendedName>
    <alternativeName>
        <fullName>Fox-1 homolog B</fullName>
    </alternativeName>
    <alternativeName>
        <fullName>RNA-binding motif protein 9</fullName>
    </alternativeName>
    <alternativeName>
        <fullName>RNA-binding protein 9</fullName>
    </alternativeName>
</protein>
<gene>
    <name type="primary">RBFOX2</name>
    <name type="synonym">FOX2</name>
    <name type="synonym">RBM9</name>
</gene>
<feature type="chain" id="PRO_0000317114" description="RNA binding protein fox-1 homolog 2">
    <location>
        <begin position="1"/>
        <end position="394"/>
    </location>
</feature>
<feature type="domain" description="RRM" evidence="5">
    <location>
        <begin position="129"/>
        <end position="205"/>
    </location>
</feature>
<feature type="region of interest" description="Disordered" evidence="6">
    <location>
        <begin position="1"/>
        <end position="70"/>
    </location>
</feature>
<feature type="region of interest" description="Disordered" evidence="6">
    <location>
        <begin position="83"/>
        <end position="135"/>
    </location>
</feature>
<feature type="compositionally biased region" description="Polar residues" evidence="6">
    <location>
        <begin position="24"/>
        <end position="36"/>
    </location>
</feature>
<feature type="compositionally biased region" description="Polar residues" evidence="6">
    <location>
        <begin position="83"/>
        <end position="103"/>
    </location>
</feature>
<feature type="compositionally biased region" description="Low complexity" evidence="6">
    <location>
        <begin position="105"/>
        <end position="125"/>
    </location>
</feature>
<feature type="site" description="Interaction with RNA" evidence="1">
    <location>
        <position position="130"/>
    </location>
</feature>
<feature type="site" description="Interaction with RNA" evidence="1">
    <location>
        <position position="138"/>
    </location>
</feature>
<feature type="site" description="Interaction with RNA" evidence="1">
    <location>
        <position position="139"/>
    </location>
</feature>
<feature type="site" description="Interaction with RNA" evidence="1">
    <location>
        <position position="163"/>
    </location>
</feature>
<feature type="site" description="Interaction with RNA" evidence="1">
    <location>
        <position position="168"/>
    </location>
</feature>
<feature type="site" description="Interaction with RNA" evidence="1">
    <location>
        <position position="172"/>
    </location>
</feature>
<feature type="site" description="Interaction with RNA" evidence="1">
    <location>
        <position position="196"/>
    </location>
</feature>
<feature type="site" description="Interaction with RNA" evidence="1">
    <location>
        <position position="206"/>
    </location>
</feature>
<feature type="modified residue" description="Omega-N-methylarginine" evidence="4">
    <location>
        <position position="285"/>
    </location>
</feature>
<feature type="modified residue" description="Asymmetric dimethylarginine" evidence="4">
    <location>
        <position position="301"/>
    </location>
</feature>
<feature type="modified residue" description="Asymmetric dimethylarginine" evidence="3">
    <location>
        <position position="333"/>
    </location>
</feature>
<feature type="modified residue" description="Asymmetric dimethylarginine; alternate" evidence="4">
    <location>
        <position position="385"/>
    </location>
</feature>
<feature type="modified residue" description="Omega-N-methylarginine; alternate" evidence="4">
    <location>
        <position position="385"/>
    </location>
</feature>
<feature type="modified residue" description="Asymmetric dimethylarginine; alternate" evidence="4">
    <location>
        <position position="390"/>
    </location>
</feature>
<feature type="modified residue" description="Omega-N-methylarginine; alternate" evidence="4">
    <location>
        <position position="390"/>
    </location>
</feature>
<feature type="splice variant" id="VSP_030887" description="In isoform 2." evidence="7">
    <original>T</original>
    <variation>TQ</variation>
    <location>
        <position position="102"/>
    </location>
</feature>
<feature type="splice variant" id="VSP_030888" description="In isoform 2." evidence="7">
    <original>II</original>
    <variation>ISLPLV</variation>
    <location>
        <begin position="268"/>
        <end position="269"/>
    </location>
</feature>
<feature type="sequence conflict" description="In Ref. 1; AAI49448." evidence="8" ref="1">
    <original>MGRLQMLKHK</original>
    <variation>MSSDSMDQPRNPCE</variation>
    <location>
        <begin position="1"/>
        <end position="10"/>
    </location>
</feature>
<sequence>MGRLQMLKHKNEPLTPGYHGFPTRDSQGNQEPTTTPDAMVQPFTTIPFPPPPQNGIPTEYGVPHTQDYAGQTSEHNLTLYGSTQAHGEQSSNSPSTQNGSLTTEGGAQTDGQQSQTQSSENSESKSTPKRLHVSNIPFRFRDPDLRQMFGQFGKILDVEIIFNERGSKGFGFVTFENSADADRAREKLHGTVVEGRKIEVNNATARVMTNKKMVTPYANGWKLSPVVGAVYGPELYAASSFQADVSLGNDAAVPLSGRGGINTYIPLIIPGFPYPTAATTAAAFRGAHLRGRGRTVYGAVRAVPPAAIPAYPGVVYQDGFYGADLYGGYAAYRYAQPATATAATAAAAAAAAYSDGYGRVYTADPYHALAPAASYGVGAVASLYRGGYSRFAPY</sequence>
<accession>A6QPR6</accession>
<accession>Q0V8B8</accession>
<comment type="function">
    <text evidence="1 2">RNA-binding protein that regulates alternative splicing events by binding to 5'-UGCAUGU-3' elements. Prevents binding of U2AF2 to the 3'-splice site. Regulates alternative splicing of tissue-specific exons and of differentially spliced exons during erythropoiesis. Seems to act as a coregulatory factor of ER-alpha (By similarity). Together with RNA binding proteins RBPMS and MBNL1/2, activates vascular smooth muscle cells alternative splicing events (By similarity).</text>
</comment>
<comment type="subunit">
    <text evidence="1 3">Interacts with ER-alpha N-terminal activation domain. Interacts with RBPMS; the interaction allows cooperative assembly of stable cell-specific alternative splicing regulatory complexes (By similarity).</text>
</comment>
<comment type="subcellular location">
    <subcellularLocation>
        <location evidence="1">Nucleus</location>
    </subcellularLocation>
    <subcellularLocation>
        <location evidence="1">Cytoplasm</location>
    </subcellularLocation>
</comment>
<comment type="alternative products">
    <event type="alternative splicing"/>
    <isoform>
        <id>A6QPR6-1</id>
        <name>1</name>
        <sequence type="displayed"/>
    </isoform>
    <isoform>
        <id>A6QPR6-2</id>
        <name>2</name>
        <sequence type="described" ref="VSP_030887 VSP_030888"/>
    </isoform>
</comment>
<comment type="sequence caution" evidence="8">
    <conflict type="erroneous initiation">
        <sequence resource="EMBL-CDS" id="AAI49448"/>
    </conflict>
    <text>Extended N-terminus.</text>
</comment>
<dbReference type="EMBL" id="BC149447">
    <property type="protein sequence ID" value="AAI49448.1"/>
    <property type="status" value="ALT_INIT"/>
    <property type="molecule type" value="mRNA"/>
</dbReference>
<dbReference type="EMBL" id="BT026301">
    <property type="protein sequence ID" value="ABG81457.1"/>
    <property type="molecule type" value="mRNA"/>
</dbReference>
<dbReference type="SMR" id="A6QPR6"/>
<dbReference type="FunCoup" id="A6QPR6">
    <property type="interactions" value="200"/>
</dbReference>
<dbReference type="STRING" id="9913.ENSBTAP00000066608"/>
<dbReference type="PaxDb" id="9913-ENSBTAP00000026808"/>
<dbReference type="eggNOG" id="KOG0125">
    <property type="taxonomic scope" value="Eukaryota"/>
</dbReference>
<dbReference type="InParanoid" id="A6QPR6"/>
<dbReference type="Proteomes" id="UP000009136">
    <property type="component" value="Unplaced"/>
</dbReference>
<dbReference type="GO" id="GO:0005737">
    <property type="term" value="C:cytoplasm"/>
    <property type="evidence" value="ECO:0000318"/>
    <property type="project" value="GO_Central"/>
</dbReference>
<dbReference type="GO" id="GO:0005634">
    <property type="term" value="C:nucleus"/>
    <property type="evidence" value="ECO:0000250"/>
    <property type="project" value="UniProtKB"/>
</dbReference>
<dbReference type="GO" id="GO:0140297">
    <property type="term" value="F:DNA-binding transcription factor binding"/>
    <property type="evidence" value="ECO:0000250"/>
    <property type="project" value="UniProtKB"/>
</dbReference>
<dbReference type="GO" id="GO:0003729">
    <property type="term" value="F:mRNA binding"/>
    <property type="evidence" value="ECO:0000318"/>
    <property type="project" value="GO_Central"/>
</dbReference>
<dbReference type="GO" id="GO:0003723">
    <property type="term" value="F:RNA binding"/>
    <property type="evidence" value="ECO:0000250"/>
    <property type="project" value="UniProtKB"/>
</dbReference>
<dbReference type="GO" id="GO:0003714">
    <property type="term" value="F:transcription corepressor activity"/>
    <property type="evidence" value="ECO:0000250"/>
    <property type="project" value="UniProtKB"/>
</dbReference>
<dbReference type="GO" id="GO:0030520">
    <property type="term" value="P:estrogen receptor signaling pathway"/>
    <property type="evidence" value="ECO:0000250"/>
    <property type="project" value="UniProtKB"/>
</dbReference>
<dbReference type="GO" id="GO:0006397">
    <property type="term" value="P:mRNA processing"/>
    <property type="evidence" value="ECO:0007669"/>
    <property type="project" value="UniProtKB-KW"/>
</dbReference>
<dbReference type="GO" id="GO:0045892">
    <property type="term" value="P:negative regulation of DNA-templated transcription"/>
    <property type="evidence" value="ECO:0000250"/>
    <property type="project" value="UniProtKB"/>
</dbReference>
<dbReference type="GO" id="GO:0007399">
    <property type="term" value="P:nervous system development"/>
    <property type="evidence" value="ECO:0000318"/>
    <property type="project" value="GO_Central"/>
</dbReference>
<dbReference type="GO" id="GO:0000381">
    <property type="term" value="P:regulation of alternative mRNA splicing, via spliceosome"/>
    <property type="evidence" value="ECO:0000250"/>
    <property type="project" value="UniProtKB"/>
</dbReference>
<dbReference type="GO" id="GO:0008380">
    <property type="term" value="P:RNA splicing"/>
    <property type="evidence" value="ECO:0007669"/>
    <property type="project" value="UniProtKB-KW"/>
</dbReference>
<dbReference type="CDD" id="cd12407">
    <property type="entry name" value="RRM_FOX1_like"/>
    <property type="match status" value="1"/>
</dbReference>
<dbReference type="FunFam" id="3.30.70.330:FF:000375">
    <property type="entry name" value="RNA binding fox-1 homolog 1"/>
    <property type="match status" value="1"/>
</dbReference>
<dbReference type="Gene3D" id="3.30.70.330">
    <property type="match status" value="1"/>
</dbReference>
<dbReference type="InterPro" id="IPR025670">
    <property type="entry name" value="Fox-1_C_dom"/>
</dbReference>
<dbReference type="InterPro" id="IPR034237">
    <property type="entry name" value="FOX1_RRM"/>
</dbReference>
<dbReference type="InterPro" id="IPR012677">
    <property type="entry name" value="Nucleotide-bd_a/b_plait_sf"/>
</dbReference>
<dbReference type="InterPro" id="IPR035979">
    <property type="entry name" value="RBD_domain_sf"/>
</dbReference>
<dbReference type="InterPro" id="IPR017325">
    <property type="entry name" value="RBFOX1-3"/>
</dbReference>
<dbReference type="InterPro" id="IPR047131">
    <property type="entry name" value="RBFOX1-like"/>
</dbReference>
<dbReference type="InterPro" id="IPR000504">
    <property type="entry name" value="RRM_dom"/>
</dbReference>
<dbReference type="PANTHER" id="PTHR15597">
    <property type="entry name" value="ATAXIN 2-BINDING PROTEIN 1-RELATED"/>
    <property type="match status" value="1"/>
</dbReference>
<dbReference type="PANTHER" id="PTHR15597:SF31">
    <property type="entry name" value="RNA BINDING PROTEIN FOX-1 HOMOLOG 2"/>
    <property type="match status" value="1"/>
</dbReference>
<dbReference type="Pfam" id="PF12414">
    <property type="entry name" value="Fox-1_C"/>
    <property type="match status" value="1"/>
</dbReference>
<dbReference type="Pfam" id="PF00076">
    <property type="entry name" value="RRM_1"/>
    <property type="match status" value="1"/>
</dbReference>
<dbReference type="PIRSF" id="PIRSF037932">
    <property type="entry name" value="Ataxin_2_bd_A2BP"/>
    <property type="match status" value="1"/>
</dbReference>
<dbReference type="SMART" id="SM00360">
    <property type="entry name" value="RRM"/>
    <property type="match status" value="1"/>
</dbReference>
<dbReference type="SUPFAM" id="SSF54928">
    <property type="entry name" value="RNA-binding domain, RBD"/>
    <property type="match status" value="1"/>
</dbReference>
<dbReference type="PROSITE" id="PS50102">
    <property type="entry name" value="RRM"/>
    <property type="match status" value="1"/>
</dbReference>
<name>RFOX2_BOVIN</name>
<reference key="1">
    <citation type="submission" date="2007-07" db="EMBL/GenBank/DDBJ databases">
        <authorList>
            <consortium name="NIH - Mammalian Gene Collection (MGC) project"/>
        </authorList>
    </citation>
    <scope>NUCLEOTIDE SEQUENCE [LARGE SCALE MRNA] (ISOFORM 1)</scope>
    <source>
        <strain>Hereford</strain>
        <tissue>Hypothalamus</tissue>
    </source>
</reference>
<reference key="2">
    <citation type="journal article" date="2005" name="BMC Genomics">
        <title>Characterization of 954 bovine full-CDS cDNA sequences.</title>
        <authorList>
            <person name="Harhay G.P."/>
            <person name="Sonstegard T.S."/>
            <person name="Keele J.W."/>
            <person name="Heaton M.P."/>
            <person name="Clawson M.L."/>
            <person name="Snelling W.M."/>
            <person name="Wiedmann R.T."/>
            <person name="Van Tassell C.P."/>
            <person name="Smith T.P.L."/>
        </authorList>
    </citation>
    <scope>NUCLEOTIDE SEQUENCE [LARGE SCALE MRNA] OF 1-279 (ISOFORM 2)</scope>
</reference>